<feature type="chain" id="PRO_0000170191" description="Large ribosomal subunit protein bL33B">
    <location>
        <begin position="1"/>
        <end position="48"/>
    </location>
</feature>
<accession>P56850</accession>
<gene>
    <name type="primary">rpmG2</name>
    <name type="ordered locus">MPN_069</name>
    <name type="ORF">MP085.1</name>
</gene>
<comment type="similarity">
    <text evidence="2">Belongs to the bacterial ribosomal protein bL33 family.</text>
</comment>
<name>RL332_MYCPN</name>
<keyword id="KW-1185">Reference proteome</keyword>
<keyword id="KW-0687">Ribonucleoprotein</keyword>
<keyword id="KW-0689">Ribosomal protein</keyword>
<organism>
    <name type="scientific">Mycoplasma pneumoniae (strain ATCC 29342 / M129 / Subtype 1)</name>
    <name type="common">Mycoplasmoides pneumoniae</name>
    <dbReference type="NCBI Taxonomy" id="272634"/>
    <lineage>
        <taxon>Bacteria</taxon>
        <taxon>Bacillati</taxon>
        <taxon>Mycoplasmatota</taxon>
        <taxon>Mycoplasmoidales</taxon>
        <taxon>Mycoplasmoidaceae</taxon>
        <taxon>Mycoplasmoides</taxon>
    </lineage>
</organism>
<dbReference type="EMBL" id="U00089">
    <property type="protein sequence ID" value="AAG34736.1"/>
    <property type="molecule type" value="Genomic_DNA"/>
</dbReference>
<dbReference type="RefSeq" id="NP_109757.1">
    <property type="nucleotide sequence ID" value="NC_000912.1"/>
</dbReference>
<dbReference type="SMR" id="P56850"/>
<dbReference type="STRING" id="272634.MPN_069"/>
<dbReference type="EnsemblBacteria" id="AAG34736">
    <property type="protein sequence ID" value="AAG34736"/>
    <property type="gene ID" value="MPN_069"/>
</dbReference>
<dbReference type="KEGG" id="mpn:MPN_069"/>
<dbReference type="PATRIC" id="fig|272634.6.peg.70"/>
<dbReference type="HOGENOM" id="CLU_190949_0_1_14"/>
<dbReference type="OrthoDB" id="197660at2"/>
<dbReference type="BioCyc" id="MPNE272634:G1GJ3-107-MONOMER"/>
<dbReference type="Proteomes" id="UP000000808">
    <property type="component" value="Chromosome"/>
</dbReference>
<dbReference type="GO" id="GO:0005737">
    <property type="term" value="C:cytoplasm"/>
    <property type="evidence" value="ECO:0007669"/>
    <property type="project" value="UniProtKB-ARBA"/>
</dbReference>
<dbReference type="GO" id="GO:1990904">
    <property type="term" value="C:ribonucleoprotein complex"/>
    <property type="evidence" value="ECO:0007669"/>
    <property type="project" value="UniProtKB-KW"/>
</dbReference>
<dbReference type="GO" id="GO:0005840">
    <property type="term" value="C:ribosome"/>
    <property type="evidence" value="ECO:0007669"/>
    <property type="project" value="UniProtKB-KW"/>
</dbReference>
<dbReference type="GO" id="GO:0003735">
    <property type="term" value="F:structural constituent of ribosome"/>
    <property type="evidence" value="ECO:0007669"/>
    <property type="project" value="InterPro"/>
</dbReference>
<dbReference type="GO" id="GO:0006412">
    <property type="term" value="P:translation"/>
    <property type="evidence" value="ECO:0007669"/>
    <property type="project" value="UniProtKB-UniRule"/>
</dbReference>
<dbReference type="Gene3D" id="2.20.28.120">
    <property type="entry name" value="Ribosomal protein L33"/>
    <property type="match status" value="1"/>
</dbReference>
<dbReference type="HAMAP" id="MF_00294">
    <property type="entry name" value="Ribosomal_bL33"/>
    <property type="match status" value="1"/>
</dbReference>
<dbReference type="InterPro" id="IPR001705">
    <property type="entry name" value="Ribosomal_bL33"/>
</dbReference>
<dbReference type="InterPro" id="IPR038584">
    <property type="entry name" value="Ribosomal_bL33_sf"/>
</dbReference>
<dbReference type="InterPro" id="IPR011332">
    <property type="entry name" value="Ribosomal_zn-bd"/>
</dbReference>
<dbReference type="NCBIfam" id="NF001764">
    <property type="entry name" value="PRK00504.1"/>
    <property type="match status" value="1"/>
</dbReference>
<dbReference type="NCBIfam" id="TIGR01023">
    <property type="entry name" value="rpmG_bact"/>
    <property type="match status" value="1"/>
</dbReference>
<dbReference type="Pfam" id="PF00471">
    <property type="entry name" value="Ribosomal_L33"/>
    <property type="match status" value="1"/>
</dbReference>
<dbReference type="SUPFAM" id="SSF57829">
    <property type="entry name" value="Zn-binding ribosomal proteins"/>
    <property type="match status" value="1"/>
</dbReference>
<sequence>MRKKIIFVCQDCLSRNYVMSWSKQVLNRLIINKYCKHCNQKTKHLDSF</sequence>
<evidence type="ECO:0000255" key="1">
    <source>
        <dbReference type="HAMAP-Rule" id="MF_00294"/>
    </source>
</evidence>
<evidence type="ECO:0000305" key="2"/>
<proteinExistence type="inferred from homology"/>
<reference key="1">
    <citation type="journal article" date="1996" name="Nucleic Acids Res.">
        <title>Complete sequence analysis of the genome of the bacterium Mycoplasma pneumoniae.</title>
        <authorList>
            <person name="Himmelreich R."/>
            <person name="Hilbert H."/>
            <person name="Plagens H."/>
            <person name="Pirkl E."/>
            <person name="Li B.-C."/>
            <person name="Herrmann R."/>
        </authorList>
    </citation>
    <scope>NUCLEOTIDE SEQUENCE [LARGE SCALE GENOMIC DNA]</scope>
    <source>
        <strain>ATCC 29342 / M129 / Subtype 1</strain>
    </source>
</reference>
<protein>
    <recommendedName>
        <fullName evidence="1">Large ribosomal subunit protein bL33B</fullName>
    </recommendedName>
    <alternativeName>
        <fullName>50S ribosomal protein L33 2</fullName>
    </alternativeName>
</protein>